<proteinExistence type="inferred from homology"/>
<gene>
    <name evidence="1" type="primary">acs</name>
    <name type="ordered locus">YPTB0308</name>
</gene>
<reference key="1">
    <citation type="journal article" date="2004" name="Proc. Natl. Acad. Sci. U.S.A.">
        <title>Insights into the evolution of Yersinia pestis through whole-genome comparison with Yersinia pseudotuberculosis.</title>
        <authorList>
            <person name="Chain P.S.G."/>
            <person name="Carniel E."/>
            <person name="Larimer F.W."/>
            <person name="Lamerdin J."/>
            <person name="Stoutland P.O."/>
            <person name="Regala W.M."/>
            <person name="Georgescu A.M."/>
            <person name="Vergez L.M."/>
            <person name="Land M.L."/>
            <person name="Motin V.L."/>
            <person name="Brubaker R.R."/>
            <person name="Fowler J."/>
            <person name="Hinnebusch J."/>
            <person name="Marceau M."/>
            <person name="Medigue C."/>
            <person name="Simonet M."/>
            <person name="Chenal-Francisque V."/>
            <person name="Souza B."/>
            <person name="Dacheux D."/>
            <person name="Elliott J.M."/>
            <person name="Derbise A."/>
            <person name="Hauser L.J."/>
            <person name="Garcia E."/>
        </authorList>
    </citation>
    <scope>NUCLEOTIDE SEQUENCE [LARGE SCALE GENOMIC DNA]</scope>
    <source>
        <strain>IP32953</strain>
    </source>
</reference>
<sequence>MSQIHKHPIPAAIAEHALITPEKYQHYYQQSVQNPDEFWGEQGKIIDWIKPYKTVKNTSFDPGHVSIRWFEDGTLNLAANCLDRHLAERGDQTAIIWEGDDPNQSKTVTYKQLHHDVCQFANVLKSLGIKKGDVVAIYMPMVPEAAVAMLACARIGAVHSVIFGGFSPDAVAGRIIDSHSKLVITADEGIRAGRAIPLKKNVDEALKNPAITSIKNVVVFQRTGNASYWEDGRDVWWHDLIKEASADCPPEEMNAEDPLFILYTSGSTGKPKGVVHTTGGYLVYAALTFKYVFDYHPGDIYWCTADVGWVTGHSYLLYGPLACGAITLMFEGVPNYPGVNRLSQVVDKHKVNILYTAPTAIRALMAEGDKAIEGTKRDSLRIMGSVGEPINPEAWEWYYNKIGNSKCPIVDTWWQTETGGFMITPLPGATELKAGSATRPFFGVQPALVDNLGNPQEGVAEGNLVITDSWPGQARTLFGDHDRFEQTYFSTFKGMYFSGDGARRDEDGYYWITGRVDDVLNVSGHRLGTAEIESALVAHPKIAEAAVVGVPHNIKGQAIYAYITLNHGEEPTPELYTEVRNWVRKEIGPLATPDILHWTDSLPKTRSGKIMRRILRKIATGDTSNLGDTSTLADPSVVEKLLEEKQSMQTPS</sequence>
<feature type="chain" id="PRO_1000065337" description="Acetyl-coenzyme A synthetase">
    <location>
        <begin position="1"/>
        <end position="652"/>
    </location>
</feature>
<feature type="binding site" evidence="1">
    <location>
        <begin position="191"/>
        <end position="194"/>
    </location>
    <ligand>
        <name>CoA</name>
        <dbReference type="ChEBI" id="CHEBI:57287"/>
    </ligand>
</feature>
<feature type="binding site" evidence="1">
    <location>
        <position position="311"/>
    </location>
    <ligand>
        <name>CoA</name>
        <dbReference type="ChEBI" id="CHEBI:57287"/>
    </ligand>
</feature>
<feature type="binding site" evidence="1">
    <location>
        <position position="335"/>
    </location>
    <ligand>
        <name>CoA</name>
        <dbReference type="ChEBI" id="CHEBI:57287"/>
    </ligand>
</feature>
<feature type="binding site" evidence="1">
    <location>
        <begin position="387"/>
        <end position="389"/>
    </location>
    <ligand>
        <name>ATP</name>
        <dbReference type="ChEBI" id="CHEBI:30616"/>
    </ligand>
</feature>
<feature type="binding site" evidence="1">
    <location>
        <begin position="411"/>
        <end position="416"/>
    </location>
    <ligand>
        <name>ATP</name>
        <dbReference type="ChEBI" id="CHEBI:30616"/>
    </ligand>
</feature>
<feature type="binding site" evidence="1">
    <location>
        <position position="500"/>
    </location>
    <ligand>
        <name>ATP</name>
        <dbReference type="ChEBI" id="CHEBI:30616"/>
    </ligand>
</feature>
<feature type="binding site" evidence="1">
    <location>
        <position position="515"/>
    </location>
    <ligand>
        <name>ATP</name>
        <dbReference type="ChEBI" id="CHEBI:30616"/>
    </ligand>
</feature>
<feature type="binding site" evidence="1">
    <location>
        <position position="523"/>
    </location>
    <ligand>
        <name>CoA</name>
        <dbReference type="ChEBI" id="CHEBI:57287"/>
    </ligand>
</feature>
<feature type="binding site" evidence="1">
    <location>
        <position position="526"/>
    </location>
    <ligand>
        <name>ATP</name>
        <dbReference type="ChEBI" id="CHEBI:30616"/>
    </ligand>
</feature>
<feature type="binding site" evidence="1">
    <location>
        <position position="537"/>
    </location>
    <ligand>
        <name>Mg(2+)</name>
        <dbReference type="ChEBI" id="CHEBI:18420"/>
    </ligand>
</feature>
<feature type="binding site" evidence="1">
    <location>
        <position position="539"/>
    </location>
    <ligand>
        <name>Mg(2+)</name>
        <dbReference type="ChEBI" id="CHEBI:18420"/>
    </ligand>
</feature>
<feature type="binding site" evidence="1">
    <location>
        <position position="542"/>
    </location>
    <ligand>
        <name>Mg(2+)</name>
        <dbReference type="ChEBI" id="CHEBI:18420"/>
    </ligand>
</feature>
<feature type="binding site" evidence="1">
    <location>
        <position position="584"/>
    </location>
    <ligand>
        <name>CoA</name>
        <dbReference type="ChEBI" id="CHEBI:57287"/>
    </ligand>
</feature>
<feature type="modified residue" description="N6-acetyllysine" evidence="1">
    <location>
        <position position="609"/>
    </location>
</feature>
<dbReference type="EC" id="6.2.1.1" evidence="1"/>
<dbReference type="EMBL" id="BX936398">
    <property type="protein sequence ID" value="CAH19548.1"/>
    <property type="molecule type" value="Genomic_DNA"/>
</dbReference>
<dbReference type="RefSeq" id="WP_011191563.1">
    <property type="nucleotide sequence ID" value="NC_006155.1"/>
</dbReference>
<dbReference type="SMR" id="Q66FM8"/>
<dbReference type="GeneID" id="49787698"/>
<dbReference type="KEGG" id="ypo:BZ17_2260"/>
<dbReference type="KEGG" id="yps:YPTB0308"/>
<dbReference type="PATRIC" id="fig|273123.14.peg.2394"/>
<dbReference type="Proteomes" id="UP000001011">
    <property type="component" value="Chromosome"/>
</dbReference>
<dbReference type="GO" id="GO:0005829">
    <property type="term" value="C:cytosol"/>
    <property type="evidence" value="ECO:0007669"/>
    <property type="project" value="TreeGrafter"/>
</dbReference>
<dbReference type="GO" id="GO:0003987">
    <property type="term" value="F:acetate-CoA ligase activity"/>
    <property type="evidence" value="ECO:0007669"/>
    <property type="project" value="UniProtKB-UniRule"/>
</dbReference>
<dbReference type="GO" id="GO:0016208">
    <property type="term" value="F:AMP binding"/>
    <property type="evidence" value="ECO:0007669"/>
    <property type="project" value="InterPro"/>
</dbReference>
<dbReference type="GO" id="GO:0005524">
    <property type="term" value="F:ATP binding"/>
    <property type="evidence" value="ECO:0007669"/>
    <property type="project" value="UniProtKB-KW"/>
</dbReference>
<dbReference type="GO" id="GO:0046872">
    <property type="term" value="F:metal ion binding"/>
    <property type="evidence" value="ECO:0007669"/>
    <property type="project" value="UniProtKB-KW"/>
</dbReference>
<dbReference type="GO" id="GO:0019427">
    <property type="term" value="P:acetyl-CoA biosynthetic process from acetate"/>
    <property type="evidence" value="ECO:0007669"/>
    <property type="project" value="UniProtKB-UniRule"/>
</dbReference>
<dbReference type="GO" id="GO:0006935">
    <property type="term" value="P:chemotaxis"/>
    <property type="evidence" value="ECO:0007669"/>
    <property type="project" value="UniProtKB-UniRule"/>
</dbReference>
<dbReference type="CDD" id="cd05966">
    <property type="entry name" value="ACS"/>
    <property type="match status" value="1"/>
</dbReference>
<dbReference type="FunFam" id="3.30.300.30:FF:000004">
    <property type="entry name" value="Acetyl-coenzyme A synthetase"/>
    <property type="match status" value="1"/>
</dbReference>
<dbReference type="FunFam" id="3.40.50.12780:FF:000001">
    <property type="entry name" value="Acetyl-coenzyme A synthetase"/>
    <property type="match status" value="1"/>
</dbReference>
<dbReference type="Gene3D" id="3.30.300.30">
    <property type="match status" value="1"/>
</dbReference>
<dbReference type="Gene3D" id="3.40.50.12780">
    <property type="entry name" value="N-terminal domain of ligase-like"/>
    <property type="match status" value="1"/>
</dbReference>
<dbReference type="HAMAP" id="MF_01123">
    <property type="entry name" value="Ac_CoA_synth"/>
    <property type="match status" value="1"/>
</dbReference>
<dbReference type="InterPro" id="IPR011904">
    <property type="entry name" value="Ac_CoA_lig"/>
</dbReference>
<dbReference type="InterPro" id="IPR032387">
    <property type="entry name" value="ACAS_N"/>
</dbReference>
<dbReference type="InterPro" id="IPR025110">
    <property type="entry name" value="AMP-bd_C"/>
</dbReference>
<dbReference type="InterPro" id="IPR045851">
    <property type="entry name" value="AMP-bd_C_sf"/>
</dbReference>
<dbReference type="InterPro" id="IPR020845">
    <property type="entry name" value="AMP-binding_CS"/>
</dbReference>
<dbReference type="InterPro" id="IPR000873">
    <property type="entry name" value="AMP-dep_synth/lig_dom"/>
</dbReference>
<dbReference type="InterPro" id="IPR042099">
    <property type="entry name" value="ANL_N_sf"/>
</dbReference>
<dbReference type="NCBIfam" id="TIGR02188">
    <property type="entry name" value="Ac_CoA_lig_AcsA"/>
    <property type="match status" value="1"/>
</dbReference>
<dbReference type="NCBIfam" id="NF001208">
    <property type="entry name" value="PRK00174.1"/>
    <property type="match status" value="1"/>
</dbReference>
<dbReference type="PANTHER" id="PTHR24095">
    <property type="entry name" value="ACETYL-COENZYME A SYNTHETASE"/>
    <property type="match status" value="1"/>
</dbReference>
<dbReference type="PANTHER" id="PTHR24095:SF243">
    <property type="entry name" value="ACETYL-COENZYME A SYNTHETASE"/>
    <property type="match status" value="1"/>
</dbReference>
<dbReference type="Pfam" id="PF16177">
    <property type="entry name" value="ACAS_N"/>
    <property type="match status" value="1"/>
</dbReference>
<dbReference type="Pfam" id="PF00501">
    <property type="entry name" value="AMP-binding"/>
    <property type="match status" value="1"/>
</dbReference>
<dbReference type="Pfam" id="PF13193">
    <property type="entry name" value="AMP-binding_C"/>
    <property type="match status" value="1"/>
</dbReference>
<dbReference type="SUPFAM" id="SSF56801">
    <property type="entry name" value="Acetyl-CoA synthetase-like"/>
    <property type="match status" value="1"/>
</dbReference>
<dbReference type="PROSITE" id="PS00455">
    <property type="entry name" value="AMP_BINDING"/>
    <property type="match status" value="1"/>
</dbReference>
<keyword id="KW-0007">Acetylation</keyword>
<keyword id="KW-0067">ATP-binding</keyword>
<keyword id="KW-0436">Ligase</keyword>
<keyword id="KW-0460">Magnesium</keyword>
<keyword id="KW-0479">Metal-binding</keyword>
<keyword id="KW-0547">Nucleotide-binding</keyword>
<organism>
    <name type="scientific">Yersinia pseudotuberculosis serotype I (strain IP32953)</name>
    <dbReference type="NCBI Taxonomy" id="273123"/>
    <lineage>
        <taxon>Bacteria</taxon>
        <taxon>Pseudomonadati</taxon>
        <taxon>Pseudomonadota</taxon>
        <taxon>Gammaproteobacteria</taxon>
        <taxon>Enterobacterales</taxon>
        <taxon>Yersiniaceae</taxon>
        <taxon>Yersinia</taxon>
    </lineage>
</organism>
<accession>Q66FM8</accession>
<comment type="function">
    <text evidence="1">Catalyzes the conversion of acetate into acetyl-CoA (AcCoA), an essential intermediate at the junction of anabolic and catabolic pathways. Acs undergoes a two-step reaction. In the first half reaction, Acs combines acetate with ATP to form acetyl-adenylate (AcAMP) intermediate. In the second half reaction, it can then transfer the acetyl group from AcAMP to the sulfhydryl group of CoA, forming the product AcCoA.</text>
</comment>
<comment type="function">
    <text evidence="1">Enables the cell to use acetate during aerobic growth to generate energy via the TCA cycle, and biosynthetic compounds via the glyoxylate shunt. Acetylates CheY, the response regulator involved in flagellar movement and chemotaxis.</text>
</comment>
<comment type="catalytic activity">
    <reaction evidence="1">
        <text>acetate + ATP + CoA = acetyl-CoA + AMP + diphosphate</text>
        <dbReference type="Rhea" id="RHEA:23176"/>
        <dbReference type="ChEBI" id="CHEBI:30089"/>
        <dbReference type="ChEBI" id="CHEBI:30616"/>
        <dbReference type="ChEBI" id="CHEBI:33019"/>
        <dbReference type="ChEBI" id="CHEBI:57287"/>
        <dbReference type="ChEBI" id="CHEBI:57288"/>
        <dbReference type="ChEBI" id="CHEBI:456215"/>
        <dbReference type="EC" id="6.2.1.1"/>
    </reaction>
</comment>
<comment type="cofactor">
    <cofactor evidence="1">
        <name>Mg(2+)</name>
        <dbReference type="ChEBI" id="CHEBI:18420"/>
    </cofactor>
</comment>
<comment type="PTM">
    <text evidence="1">Acetylated. Deacetylation by the SIR2-homolog deacetylase activates the enzyme.</text>
</comment>
<comment type="similarity">
    <text evidence="1">Belongs to the ATP-dependent AMP-binding enzyme family.</text>
</comment>
<evidence type="ECO:0000255" key="1">
    <source>
        <dbReference type="HAMAP-Rule" id="MF_01123"/>
    </source>
</evidence>
<protein>
    <recommendedName>
        <fullName evidence="1">Acetyl-coenzyme A synthetase</fullName>
        <shortName evidence="1">AcCoA synthetase</shortName>
        <shortName evidence="1">Acs</shortName>
        <ecNumber evidence="1">6.2.1.1</ecNumber>
    </recommendedName>
    <alternativeName>
        <fullName evidence="1">Acetate--CoA ligase</fullName>
    </alternativeName>
    <alternativeName>
        <fullName evidence="1">Acyl-activating enzyme</fullName>
    </alternativeName>
</protein>
<name>ACSA_YERPS</name>